<feature type="chain" id="PRO_0000061264" description="Cytochrome b">
    <location>
        <begin position="1"/>
        <end position="372"/>
    </location>
</feature>
<feature type="transmembrane region" description="Helical" evidence="2">
    <location>
        <begin position="25"/>
        <end position="45"/>
    </location>
</feature>
<feature type="transmembrane region" description="Helical" evidence="2">
    <location>
        <begin position="69"/>
        <end position="90"/>
    </location>
</feature>
<feature type="transmembrane region" description="Helical" evidence="2">
    <location>
        <begin position="105"/>
        <end position="125"/>
    </location>
</feature>
<feature type="transmembrane region" description="Helical" evidence="2">
    <location>
        <begin position="170"/>
        <end position="190"/>
    </location>
</feature>
<feature type="transmembrane region" description="Helical" evidence="2">
    <location>
        <begin position="218"/>
        <end position="238"/>
    </location>
</feature>
<feature type="transmembrane region" description="Helical" evidence="2">
    <location>
        <begin position="280"/>
        <end position="300"/>
    </location>
</feature>
<feature type="transmembrane region" description="Helical" evidence="2">
    <location>
        <begin position="312"/>
        <end position="332"/>
    </location>
</feature>
<feature type="transmembrane region" description="Helical" evidence="2">
    <location>
        <begin position="339"/>
        <end position="358"/>
    </location>
</feature>
<feature type="binding site" description="axial binding residue" evidence="2">
    <location>
        <position position="75"/>
    </location>
    <ligand>
        <name>heme b</name>
        <dbReference type="ChEBI" id="CHEBI:60344"/>
        <label>b562</label>
    </ligand>
    <ligandPart>
        <name>Fe</name>
        <dbReference type="ChEBI" id="CHEBI:18248"/>
    </ligandPart>
</feature>
<feature type="binding site" description="axial binding residue" evidence="2">
    <location>
        <position position="89"/>
    </location>
    <ligand>
        <name>heme b</name>
        <dbReference type="ChEBI" id="CHEBI:60344"/>
        <label>b566</label>
    </ligand>
    <ligandPart>
        <name>Fe</name>
        <dbReference type="ChEBI" id="CHEBI:18248"/>
    </ligandPart>
</feature>
<feature type="binding site" description="axial binding residue" evidence="2">
    <location>
        <position position="174"/>
    </location>
    <ligand>
        <name>heme b</name>
        <dbReference type="ChEBI" id="CHEBI:60344"/>
        <label>b562</label>
    </ligand>
    <ligandPart>
        <name>Fe</name>
        <dbReference type="ChEBI" id="CHEBI:18248"/>
    </ligandPart>
</feature>
<feature type="binding site" description="axial binding residue" evidence="2">
    <location>
        <position position="188"/>
    </location>
    <ligand>
        <name>heme b</name>
        <dbReference type="ChEBI" id="CHEBI:60344"/>
        <label>b566</label>
    </ligand>
    <ligandPart>
        <name>Fe</name>
        <dbReference type="ChEBI" id="CHEBI:18248"/>
    </ligandPart>
</feature>
<feature type="binding site" evidence="2">
    <location>
        <position position="193"/>
    </location>
    <ligand>
        <name>a ubiquinone</name>
        <dbReference type="ChEBI" id="CHEBI:16389"/>
    </ligand>
</feature>
<name>CYB_NAJNI</name>
<protein>
    <recommendedName>
        <fullName>Cytochrome b</fullName>
    </recommendedName>
    <alternativeName>
        <fullName>Complex III subunit 3</fullName>
    </alternativeName>
    <alternativeName>
        <fullName>Complex III subunit III</fullName>
    </alternativeName>
    <alternativeName>
        <fullName>Cytochrome b-c1 complex subunit 3</fullName>
    </alternativeName>
    <alternativeName>
        <fullName>Ubiquinol-cytochrome-c reductase complex cytochrome b subunit</fullName>
    </alternativeName>
</protein>
<evidence type="ECO:0000250" key="1"/>
<evidence type="ECO:0000250" key="2">
    <source>
        <dbReference type="UniProtKB" id="P00157"/>
    </source>
</evidence>
<evidence type="ECO:0000255" key="3">
    <source>
        <dbReference type="PROSITE-ProRule" id="PRU00967"/>
    </source>
</evidence>
<evidence type="ECO:0000255" key="4">
    <source>
        <dbReference type="PROSITE-ProRule" id="PRU00968"/>
    </source>
</evidence>
<comment type="function">
    <text evidence="2">Component of the ubiquinol-cytochrome c reductase complex (complex III or cytochrome b-c1 complex) that is part of the mitochondrial respiratory chain. The b-c1 complex mediates electron transfer from ubiquinol to cytochrome c. Contributes to the generation of a proton gradient across the mitochondrial membrane that is then used for ATP synthesis.</text>
</comment>
<comment type="cofactor">
    <cofactor evidence="2">
        <name>heme b</name>
        <dbReference type="ChEBI" id="CHEBI:60344"/>
    </cofactor>
    <text evidence="2">Binds 2 heme b groups non-covalently.</text>
</comment>
<comment type="subunit">
    <text evidence="2">The cytochrome bc1 complex contains 3 respiratory subunits (MT-CYB, CYC1 and UQCRFS1), 2 core proteins (UQCRC1 and UQCRC2) and probably 6 low-molecular weight proteins.</text>
</comment>
<comment type="subcellular location">
    <subcellularLocation>
        <location evidence="2">Mitochondrion inner membrane</location>
        <topology evidence="2">Multi-pass membrane protein</topology>
    </subcellularLocation>
</comment>
<comment type="miscellaneous">
    <text evidence="1">Heme 1 (or BL or b562) is low-potential and absorbs at about 562 nm, and heme 2 (or BH or b566) is high-potential and absorbs at about 566 nm.</text>
</comment>
<comment type="similarity">
    <text evidence="3 4">Belongs to the cytochrome b family.</text>
</comment>
<comment type="caution">
    <text evidence="2">The full-length protein contains only eight transmembrane helices, not nine as predicted by bioinformatics tools.</text>
</comment>
<reference key="1">
    <citation type="journal article" date="2000" name="Mol. Phylogenet. Evol.">
        <title>Phylogenetic relationships of elapid snakes based on cytochrome b mtDNA sequences.</title>
        <authorList>
            <person name="Slowinski J.B."/>
            <person name="Keogh J.S."/>
        </authorList>
    </citation>
    <scope>NUCLEOTIDE SEQUENCE [GENOMIC DNA]</scope>
</reference>
<proteinExistence type="inferred from homology"/>
<sequence length="372" mass="42319">MSNQHALLMFNLLPVGSNISTWWNFGSMLLTCLMLQTITGFFLALHYTANINLAFSSVIHITRDVPYGWIMQNLHAISASLFFVCIYIHIARGLYYGLYLNKEVWLSGTALLITLMATAFFGYVLPWGQMSFWAATVITNLLTAIPYLGTTLTTWLWGGFSINDPTITRFFALHFILPFIIISLSSIHIILLHNEGSNNPLGTNSDIDKIPFHPYHSYKDMLMATTMITLLFLILSFAPNLLNDPENFSKANPLVTPQHIKPEWYFLFAYGILRSIPNKLGGTLALIMSVMILTTMPFTHTSHTRSMMFRPLSQILFWTLIATFITITWTASKPVEPPFITISQTTSIIYFFFFITTPLLGWAENKMMMMNN</sequence>
<accession>Q9MLK1</accession>
<geneLocation type="mitochondrion"/>
<dbReference type="EMBL" id="AF217827">
    <property type="protein sequence ID" value="AAF37246.1"/>
    <property type="molecule type" value="Genomic_DNA"/>
</dbReference>
<dbReference type="SMR" id="Q9MLK1"/>
<dbReference type="GO" id="GO:0005743">
    <property type="term" value="C:mitochondrial inner membrane"/>
    <property type="evidence" value="ECO:0007669"/>
    <property type="project" value="UniProtKB-SubCell"/>
</dbReference>
<dbReference type="GO" id="GO:0045275">
    <property type="term" value="C:respiratory chain complex III"/>
    <property type="evidence" value="ECO:0007669"/>
    <property type="project" value="InterPro"/>
</dbReference>
<dbReference type="GO" id="GO:0046872">
    <property type="term" value="F:metal ion binding"/>
    <property type="evidence" value="ECO:0007669"/>
    <property type="project" value="UniProtKB-KW"/>
</dbReference>
<dbReference type="GO" id="GO:0008121">
    <property type="term" value="F:ubiquinol-cytochrome-c reductase activity"/>
    <property type="evidence" value="ECO:0007669"/>
    <property type="project" value="InterPro"/>
</dbReference>
<dbReference type="GO" id="GO:0006122">
    <property type="term" value="P:mitochondrial electron transport, ubiquinol to cytochrome c"/>
    <property type="evidence" value="ECO:0007669"/>
    <property type="project" value="TreeGrafter"/>
</dbReference>
<dbReference type="CDD" id="cd00290">
    <property type="entry name" value="cytochrome_b_C"/>
    <property type="match status" value="1"/>
</dbReference>
<dbReference type="CDD" id="cd00284">
    <property type="entry name" value="Cytochrome_b_N"/>
    <property type="match status" value="1"/>
</dbReference>
<dbReference type="Gene3D" id="1.20.810.10">
    <property type="entry name" value="Cytochrome Bc1 Complex, Chain C"/>
    <property type="match status" value="1"/>
</dbReference>
<dbReference type="InterPro" id="IPR005798">
    <property type="entry name" value="Cyt_b/b6_C"/>
</dbReference>
<dbReference type="InterPro" id="IPR036150">
    <property type="entry name" value="Cyt_b/b6_C_sf"/>
</dbReference>
<dbReference type="InterPro" id="IPR005797">
    <property type="entry name" value="Cyt_b/b6_N"/>
</dbReference>
<dbReference type="InterPro" id="IPR027387">
    <property type="entry name" value="Cytb/b6-like_sf"/>
</dbReference>
<dbReference type="InterPro" id="IPR030689">
    <property type="entry name" value="Cytochrome_b"/>
</dbReference>
<dbReference type="InterPro" id="IPR048260">
    <property type="entry name" value="Cytochrome_b_C_euk/bac"/>
</dbReference>
<dbReference type="InterPro" id="IPR048259">
    <property type="entry name" value="Cytochrome_b_N_euk/bac"/>
</dbReference>
<dbReference type="InterPro" id="IPR016174">
    <property type="entry name" value="Di-haem_cyt_TM"/>
</dbReference>
<dbReference type="PANTHER" id="PTHR19271">
    <property type="entry name" value="CYTOCHROME B"/>
    <property type="match status" value="1"/>
</dbReference>
<dbReference type="PANTHER" id="PTHR19271:SF16">
    <property type="entry name" value="CYTOCHROME B"/>
    <property type="match status" value="1"/>
</dbReference>
<dbReference type="Pfam" id="PF00032">
    <property type="entry name" value="Cytochrom_B_C"/>
    <property type="match status" value="1"/>
</dbReference>
<dbReference type="Pfam" id="PF00033">
    <property type="entry name" value="Cytochrome_B"/>
    <property type="match status" value="1"/>
</dbReference>
<dbReference type="PIRSF" id="PIRSF038885">
    <property type="entry name" value="COB"/>
    <property type="match status" value="1"/>
</dbReference>
<dbReference type="SUPFAM" id="SSF81648">
    <property type="entry name" value="a domain/subunit of cytochrome bc1 complex (Ubiquinol-cytochrome c reductase)"/>
    <property type="match status" value="1"/>
</dbReference>
<dbReference type="SUPFAM" id="SSF81342">
    <property type="entry name" value="Transmembrane di-heme cytochromes"/>
    <property type="match status" value="1"/>
</dbReference>
<dbReference type="PROSITE" id="PS51003">
    <property type="entry name" value="CYTB_CTER"/>
    <property type="match status" value="1"/>
</dbReference>
<dbReference type="PROSITE" id="PS51002">
    <property type="entry name" value="CYTB_NTER"/>
    <property type="match status" value="1"/>
</dbReference>
<keyword id="KW-0249">Electron transport</keyword>
<keyword id="KW-0349">Heme</keyword>
<keyword id="KW-0408">Iron</keyword>
<keyword id="KW-0472">Membrane</keyword>
<keyword id="KW-0479">Metal-binding</keyword>
<keyword id="KW-0496">Mitochondrion</keyword>
<keyword id="KW-0999">Mitochondrion inner membrane</keyword>
<keyword id="KW-0679">Respiratory chain</keyword>
<keyword id="KW-0812">Transmembrane</keyword>
<keyword id="KW-1133">Transmembrane helix</keyword>
<keyword id="KW-0813">Transport</keyword>
<keyword id="KW-0830">Ubiquinone</keyword>
<organism>
    <name type="scientific">Naja nivea</name>
    <name type="common">Cape cobra</name>
    <name type="synonym">Coluber niveus</name>
    <dbReference type="NCBI Taxonomy" id="8655"/>
    <lineage>
        <taxon>Eukaryota</taxon>
        <taxon>Metazoa</taxon>
        <taxon>Chordata</taxon>
        <taxon>Craniata</taxon>
        <taxon>Vertebrata</taxon>
        <taxon>Euteleostomi</taxon>
        <taxon>Lepidosauria</taxon>
        <taxon>Squamata</taxon>
        <taxon>Bifurcata</taxon>
        <taxon>Unidentata</taxon>
        <taxon>Episquamata</taxon>
        <taxon>Toxicofera</taxon>
        <taxon>Serpentes</taxon>
        <taxon>Colubroidea</taxon>
        <taxon>Elapidae</taxon>
        <taxon>Elapinae</taxon>
        <taxon>Naja</taxon>
    </lineage>
</organism>
<gene>
    <name type="primary">MT-CYB</name>
    <name type="synonym">COB</name>
    <name type="synonym">CYTB</name>
    <name type="synonym">MTCYB</name>
</gene>